<gene>
    <name type="primary">RpL38</name>
    <name type="ORF">AAEL005451</name>
</gene>
<accession>Q1HRT4</accession>
<dbReference type="EMBL" id="DQ440010">
    <property type="protein sequence ID" value="ABF18043.1"/>
    <property type="molecule type" value="mRNA"/>
</dbReference>
<dbReference type="EMBL" id="CH477342">
    <property type="protein sequence ID" value="EAT43077.1"/>
    <property type="molecule type" value="Genomic_DNA"/>
</dbReference>
<dbReference type="SMR" id="Q1HRT4"/>
<dbReference type="FunCoup" id="Q1HRT4">
    <property type="interactions" value="1111"/>
</dbReference>
<dbReference type="STRING" id="7159.Q1HRT4"/>
<dbReference type="PaxDb" id="7159-AAEL005451-PA"/>
<dbReference type="EnsemblMetazoa" id="AAEL005451-RA">
    <property type="protein sequence ID" value="AAEL005451-PA"/>
    <property type="gene ID" value="AAEL005451"/>
</dbReference>
<dbReference type="GeneID" id="5566522"/>
<dbReference type="KEGG" id="aag:5566522"/>
<dbReference type="CTD" id="6169"/>
<dbReference type="VEuPathDB" id="VectorBase:AAEL005451"/>
<dbReference type="eggNOG" id="KOG3499">
    <property type="taxonomic scope" value="Eukaryota"/>
</dbReference>
<dbReference type="HOGENOM" id="CLU_152057_2_0_1"/>
<dbReference type="InParanoid" id="Q1HRT4"/>
<dbReference type="OMA" id="RCHRFIY"/>
<dbReference type="OrthoDB" id="10250488at2759"/>
<dbReference type="PhylomeDB" id="Q1HRT4"/>
<dbReference type="Proteomes" id="UP000008820">
    <property type="component" value="Chromosome 2"/>
</dbReference>
<dbReference type="Proteomes" id="UP000682892">
    <property type="component" value="Chromosome 2"/>
</dbReference>
<dbReference type="GO" id="GO:0022625">
    <property type="term" value="C:cytosolic large ribosomal subunit"/>
    <property type="evidence" value="ECO:0007669"/>
    <property type="project" value="TreeGrafter"/>
</dbReference>
<dbReference type="GO" id="GO:0003735">
    <property type="term" value="F:structural constituent of ribosome"/>
    <property type="evidence" value="ECO:0007669"/>
    <property type="project" value="InterPro"/>
</dbReference>
<dbReference type="GO" id="GO:0022618">
    <property type="term" value="P:protein-RNA complex assembly"/>
    <property type="evidence" value="ECO:0007669"/>
    <property type="project" value="TreeGrafter"/>
</dbReference>
<dbReference type="GO" id="GO:0006412">
    <property type="term" value="P:translation"/>
    <property type="evidence" value="ECO:0007669"/>
    <property type="project" value="InterPro"/>
</dbReference>
<dbReference type="FunFam" id="3.30.720.90:FF:000001">
    <property type="entry name" value="60S ribosomal protein L38"/>
    <property type="match status" value="1"/>
</dbReference>
<dbReference type="Gene3D" id="3.30.720.90">
    <property type="match status" value="1"/>
</dbReference>
<dbReference type="InterPro" id="IPR002675">
    <property type="entry name" value="Ribosomal_eL38"/>
</dbReference>
<dbReference type="InterPro" id="IPR038464">
    <property type="entry name" value="Ribosomal_eL38_sf"/>
</dbReference>
<dbReference type="PANTHER" id="PTHR10965">
    <property type="entry name" value="60S RIBOSOMAL PROTEIN L38"/>
    <property type="match status" value="1"/>
</dbReference>
<dbReference type="PANTHER" id="PTHR10965:SF0">
    <property type="entry name" value="LARGE RIBOSOMAL SUBUNIT PROTEIN EL38"/>
    <property type="match status" value="1"/>
</dbReference>
<dbReference type="Pfam" id="PF01781">
    <property type="entry name" value="Ribosomal_L38e"/>
    <property type="match status" value="1"/>
</dbReference>
<reference key="1">
    <citation type="journal article" date="2007" name="BMC Genomics">
        <title>An annotated catalogue of salivary gland transcripts in the adult female mosquito, Aedes aegypti.</title>
        <authorList>
            <person name="Ribeiro J.M.C."/>
            <person name="Arca B."/>
            <person name="Lombardo F."/>
            <person name="Calvo E."/>
            <person name="Phan V.M."/>
            <person name="Chandra P.K."/>
            <person name="Wikel S.K."/>
        </authorList>
    </citation>
    <scope>NUCLEOTIDE SEQUENCE [LARGE SCALE MRNA]</scope>
    <source>
        <strain>Black-eyed Liverpool</strain>
        <tissue>Salivary gland</tissue>
    </source>
</reference>
<reference key="2">
    <citation type="journal article" date="2007" name="Science">
        <title>Genome sequence of Aedes aegypti, a major arbovirus vector.</title>
        <authorList>
            <person name="Nene V."/>
            <person name="Wortman J.R."/>
            <person name="Lawson D."/>
            <person name="Haas B.J."/>
            <person name="Kodira C.D."/>
            <person name="Tu Z.J."/>
            <person name="Loftus B.J."/>
            <person name="Xi Z."/>
            <person name="Megy K."/>
            <person name="Grabherr M."/>
            <person name="Ren Q."/>
            <person name="Zdobnov E.M."/>
            <person name="Lobo N.F."/>
            <person name="Campbell K.S."/>
            <person name="Brown S.E."/>
            <person name="Bonaldo M.F."/>
            <person name="Zhu J."/>
            <person name="Sinkins S.P."/>
            <person name="Hogenkamp D.G."/>
            <person name="Amedeo P."/>
            <person name="Arensburger P."/>
            <person name="Atkinson P.W."/>
            <person name="Bidwell S.L."/>
            <person name="Biedler J."/>
            <person name="Birney E."/>
            <person name="Bruggner R.V."/>
            <person name="Costas J."/>
            <person name="Coy M.R."/>
            <person name="Crabtree J."/>
            <person name="Crawford M."/>
            <person name="DeBruyn B."/>
            <person name="DeCaprio D."/>
            <person name="Eiglmeier K."/>
            <person name="Eisenstadt E."/>
            <person name="El-Dorry H."/>
            <person name="Gelbart W.M."/>
            <person name="Gomes S.L."/>
            <person name="Hammond M."/>
            <person name="Hannick L.I."/>
            <person name="Hogan J.R."/>
            <person name="Holmes M.H."/>
            <person name="Jaffe D."/>
            <person name="Johnston S.J."/>
            <person name="Kennedy R.C."/>
            <person name="Koo H."/>
            <person name="Kravitz S."/>
            <person name="Kriventseva E.V."/>
            <person name="Kulp D."/>
            <person name="Labutti K."/>
            <person name="Lee E."/>
            <person name="Li S."/>
            <person name="Lovin D.D."/>
            <person name="Mao C."/>
            <person name="Mauceli E."/>
            <person name="Menck C.F."/>
            <person name="Miller J.R."/>
            <person name="Montgomery P."/>
            <person name="Mori A."/>
            <person name="Nascimento A.L."/>
            <person name="Naveira H.F."/>
            <person name="Nusbaum C."/>
            <person name="O'Leary S.B."/>
            <person name="Orvis J."/>
            <person name="Pertea M."/>
            <person name="Quesneville H."/>
            <person name="Reidenbach K.R."/>
            <person name="Rogers Y.-H.C."/>
            <person name="Roth C.W."/>
            <person name="Schneider J.R."/>
            <person name="Schatz M."/>
            <person name="Shumway M."/>
            <person name="Stanke M."/>
            <person name="Stinson E.O."/>
            <person name="Tubio J.M.C."/>
            <person name="Vanzee J.P."/>
            <person name="Verjovski-Almeida S."/>
            <person name="Werner D."/>
            <person name="White O.R."/>
            <person name="Wyder S."/>
            <person name="Zeng Q."/>
            <person name="Zhao Q."/>
            <person name="Zhao Y."/>
            <person name="Hill C.A."/>
            <person name="Raikhel A.S."/>
            <person name="Soares M.B."/>
            <person name="Knudson D.L."/>
            <person name="Lee N.H."/>
            <person name="Galagan J."/>
            <person name="Salzberg S.L."/>
            <person name="Paulsen I.T."/>
            <person name="Dimopoulos G."/>
            <person name="Collins F.H."/>
            <person name="Bruce B."/>
            <person name="Fraser-Liggett C.M."/>
            <person name="Severson D.W."/>
        </authorList>
    </citation>
    <scope>NUCLEOTIDE SEQUENCE [LARGE SCALE GENOMIC DNA]</scope>
    <source>
        <strain>LVPib12</strain>
    </source>
</reference>
<protein>
    <recommendedName>
        <fullName evidence="1">Large ribosomal subunit protein eL38</fullName>
    </recommendedName>
    <alternativeName>
        <fullName>60S ribosomal protein L38</fullName>
    </alternativeName>
</protein>
<sequence>MPQEIKEVKDFLIKARRKDARAVKIKKNENNTKFKIRCSRYLYTLVVQDKEKAEKLKQSLPPGLQVKEVK</sequence>
<feature type="chain" id="PRO_0000319553" description="Large ribosomal subunit protein eL38">
    <location>
        <begin position="1"/>
        <end position="70"/>
    </location>
</feature>
<organism>
    <name type="scientific">Aedes aegypti</name>
    <name type="common">Yellowfever mosquito</name>
    <name type="synonym">Culex aegypti</name>
    <dbReference type="NCBI Taxonomy" id="7159"/>
    <lineage>
        <taxon>Eukaryota</taxon>
        <taxon>Metazoa</taxon>
        <taxon>Ecdysozoa</taxon>
        <taxon>Arthropoda</taxon>
        <taxon>Hexapoda</taxon>
        <taxon>Insecta</taxon>
        <taxon>Pterygota</taxon>
        <taxon>Neoptera</taxon>
        <taxon>Endopterygota</taxon>
        <taxon>Diptera</taxon>
        <taxon>Nematocera</taxon>
        <taxon>Culicoidea</taxon>
        <taxon>Culicidae</taxon>
        <taxon>Culicinae</taxon>
        <taxon>Aedini</taxon>
        <taxon>Aedes</taxon>
        <taxon>Stegomyia</taxon>
    </lineage>
</organism>
<evidence type="ECO:0000305" key="1"/>
<proteinExistence type="inferred from homology"/>
<keyword id="KW-1185">Reference proteome</keyword>
<keyword id="KW-0687">Ribonucleoprotein</keyword>
<keyword id="KW-0689">Ribosomal protein</keyword>
<name>RL38_AEDAE</name>
<comment type="similarity">
    <text evidence="1">Belongs to the eukaryotic ribosomal protein eL38 family.</text>
</comment>